<sequence>MIFVFANIFKVPTVSPSVMAISVRLASTEATFQTKPFKLHKLDSGPDINVHVTKEDAVHYYTQMLTIRRMESAAGNLYKEKKVRGFCHLYSGQEACAVGTKAAMDAGDAAVTAYRCHGWTYLSGSSVAKVLCELTGRITGNVYGKGGSMHMYGENFYGGNGIVGAQQPLGTGIAFAMKYRKEKNVCITMFGDGATNQGQLFESMNMAKLWDLPVLYVCENNGYGMGTAAARSSASTDYYTRGDYVPGIWVDGMDVLAVRQAVRWAKEWCNAGKGPLMIEMATYRYSGHSMSDPGTSYRTREEVQEVRKTRDPITGFKDKIVTAGLVTEDEIKEIDKQVRKEIDAAVKQAHTDKESPVELMLTDIYYNTPAQYVRCTTDEVLQKYLTSEEAVKALAK</sequence>
<dbReference type="EC" id="1.2.4.1"/>
<dbReference type="EMBL" id="M76555">
    <property type="protein sequence ID" value="AAA29376.1"/>
    <property type="molecule type" value="mRNA"/>
</dbReference>
<dbReference type="PIR" id="A31963">
    <property type="entry name" value="A31963"/>
</dbReference>
<dbReference type="PIR" id="A45608">
    <property type="entry name" value="A45608"/>
</dbReference>
<dbReference type="SMR" id="P26267"/>
<dbReference type="iPTMnet" id="P26267"/>
<dbReference type="BioCyc" id="MetaCyc:MONOMER-18299"/>
<dbReference type="GO" id="GO:0005759">
    <property type="term" value="C:mitochondrial matrix"/>
    <property type="evidence" value="ECO:0007669"/>
    <property type="project" value="UniProtKB-SubCell"/>
</dbReference>
<dbReference type="GO" id="GO:0046872">
    <property type="term" value="F:metal ion binding"/>
    <property type="evidence" value="ECO:0007669"/>
    <property type="project" value="UniProtKB-KW"/>
</dbReference>
<dbReference type="GO" id="GO:0004739">
    <property type="term" value="F:pyruvate dehydrogenase (acetyl-transferring) activity"/>
    <property type="evidence" value="ECO:0007669"/>
    <property type="project" value="UniProtKB-EC"/>
</dbReference>
<dbReference type="GO" id="GO:0006006">
    <property type="term" value="P:glucose metabolic process"/>
    <property type="evidence" value="ECO:0007669"/>
    <property type="project" value="UniProtKB-KW"/>
</dbReference>
<dbReference type="GO" id="GO:0006086">
    <property type="term" value="P:pyruvate decarboxylation to acetyl-CoA"/>
    <property type="evidence" value="ECO:0007669"/>
    <property type="project" value="InterPro"/>
</dbReference>
<dbReference type="GO" id="GO:0006099">
    <property type="term" value="P:tricarboxylic acid cycle"/>
    <property type="evidence" value="ECO:0007669"/>
    <property type="project" value="UniProtKB-KW"/>
</dbReference>
<dbReference type="CDD" id="cd02000">
    <property type="entry name" value="TPP_E1_PDC_ADC_BCADC"/>
    <property type="match status" value="1"/>
</dbReference>
<dbReference type="FunFam" id="3.40.50.970:FF:000013">
    <property type="entry name" value="Pyruvate dehydrogenase E1 component subunit alpha"/>
    <property type="match status" value="1"/>
</dbReference>
<dbReference type="Gene3D" id="3.40.50.970">
    <property type="match status" value="1"/>
</dbReference>
<dbReference type="InterPro" id="IPR001017">
    <property type="entry name" value="DH_E1"/>
</dbReference>
<dbReference type="InterPro" id="IPR050642">
    <property type="entry name" value="PDH_E1_Alpha_Subunit"/>
</dbReference>
<dbReference type="InterPro" id="IPR017597">
    <property type="entry name" value="Pyrv_DH_E1_asu_subgrp-y"/>
</dbReference>
<dbReference type="InterPro" id="IPR029061">
    <property type="entry name" value="THDP-binding"/>
</dbReference>
<dbReference type="NCBIfam" id="TIGR03182">
    <property type="entry name" value="PDH_E1_alph_y"/>
    <property type="match status" value="1"/>
</dbReference>
<dbReference type="PANTHER" id="PTHR11516:SF60">
    <property type="entry name" value="PYRUVATE DEHYDROGENASE E1 COMPONENT SUBUNIT ALPHA"/>
    <property type="match status" value="1"/>
</dbReference>
<dbReference type="PANTHER" id="PTHR11516">
    <property type="entry name" value="PYRUVATE DEHYDROGENASE E1 COMPONENT, ALPHA SUBUNIT BACTERIAL AND ORGANELLAR"/>
    <property type="match status" value="1"/>
</dbReference>
<dbReference type="Pfam" id="PF00676">
    <property type="entry name" value="E1_dh"/>
    <property type="match status" value="1"/>
</dbReference>
<dbReference type="SUPFAM" id="SSF52518">
    <property type="entry name" value="Thiamin diphosphate-binding fold (THDP-binding)"/>
    <property type="match status" value="1"/>
</dbReference>
<organism>
    <name type="scientific">Ascaris suum</name>
    <name type="common">Pig roundworm</name>
    <name type="synonym">Ascaris lumbricoides</name>
    <dbReference type="NCBI Taxonomy" id="6253"/>
    <lineage>
        <taxon>Eukaryota</taxon>
        <taxon>Metazoa</taxon>
        <taxon>Ecdysozoa</taxon>
        <taxon>Nematoda</taxon>
        <taxon>Chromadorea</taxon>
        <taxon>Rhabditida</taxon>
        <taxon>Spirurina</taxon>
        <taxon>Ascaridomorpha</taxon>
        <taxon>Ascaridoidea</taxon>
        <taxon>Ascarididae</taxon>
        <taxon>Ascaris</taxon>
    </lineage>
</organism>
<reference key="1">
    <citation type="journal article" date="1992" name="Mol. Biochem. Parasitol.">
        <title>Characterization of cDNA clones for the alpha subunit of pyruvate dehydrogenase from Ascaris suum.</title>
        <authorList>
            <person name="Johnson K.R."/>
            <person name="Komuniecki R."/>
            <person name="Sun Y."/>
            <person name="Wheelock M.J."/>
        </authorList>
    </citation>
    <scope>NUCLEOTIDE SEQUENCE [MRNA]</scope>
</reference>
<reference key="2">
    <citation type="journal article" date="1988" name="J. Biol. Chem.">
        <title>Phosphorylation and inactivation of the pyruvate dehydrogenase from the anaerobic parasitic nematode, Ascaris suum. Stoichiometry and amino acid sequence around the phosphorylation sites.</title>
        <authorList>
            <person name="Thissen J."/>
            <person name="Komuniecki R."/>
        </authorList>
    </citation>
    <scope>PROTEIN SEQUENCE OF 285-298</scope>
    <scope>PHOSPHORYLATION AT SER-289 AND SER-296</scope>
</reference>
<evidence type="ECO:0000250" key="1"/>
<evidence type="ECO:0000250" key="2">
    <source>
        <dbReference type="UniProtKB" id="P08559"/>
    </source>
</evidence>
<evidence type="ECO:0000269" key="3">
    <source>
    </source>
</evidence>
<accession>P26267</accession>
<keyword id="KW-0119">Carbohydrate metabolism</keyword>
<keyword id="KW-0903">Direct protein sequencing</keyword>
<keyword id="KW-0313">Glucose metabolism</keyword>
<keyword id="KW-0460">Magnesium</keyword>
<keyword id="KW-0479">Metal-binding</keyword>
<keyword id="KW-0496">Mitochondrion</keyword>
<keyword id="KW-0560">Oxidoreductase</keyword>
<keyword id="KW-0597">Phosphoprotein</keyword>
<keyword id="KW-0670">Pyruvate</keyword>
<keyword id="KW-0786">Thiamine pyrophosphate</keyword>
<keyword id="KW-0809">Transit peptide</keyword>
<keyword id="KW-0816">Tricarboxylic acid cycle</keyword>
<name>ODPA_ASCSU</name>
<feature type="transit peptide" description="Mitochondrion">
    <location>
        <begin position="1"/>
        <end position="25"/>
    </location>
</feature>
<feature type="chain" id="PRO_0000020437" description="Pyruvate dehydrogenase E1 component subunit alpha type I, mitochondrial">
    <location>
        <begin position="26"/>
        <end position="396"/>
    </location>
</feature>
<feature type="binding site" evidence="2">
    <location>
        <position position="88"/>
    </location>
    <ligand>
        <name>pyruvate</name>
        <dbReference type="ChEBI" id="CHEBI:15361"/>
    </ligand>
</feature>
<feature type="binding site" evidence="2">
    <location>
        <position position="114"/>
    </location>
    <ligand>
        <name>pyruvate</name>
        <dbReference type="ChEBI" id="CHEBI:15361"/>
    </ligand>
</feature>
<feature type="binding site" evidence="2">
    <location>
        <position position="114"/>
    </location>
    <ligand>
        <name>thiamine diphosphate</name>
        <dbReference type="ChEBI" id="CHEBI:58937"/>
        <note>ligand shared with beta subunit</note>
    </ligand>
</feature>
<feature type="binding site" evidence="2">
    <location>
        <position position="115"/>
    </location>
    <ligand>
        <name>pyruvate</name>
        <dbReference type="ChEBI" id="CHEBI:15361"/>
    </ligand>
</feature>
<feature type="binding site" evidence="2">
    <location>
        <position position="115"/>
    </location>
    <ligand>
        <name>thiamine diphosphate</name>
        <dbReference type="ChEBI" id="CHEBI:58937"/>
        <note>ligand shared with beta subunit</note>
    </ligand>
</feature>
<feature type="binding site" evidence="2">
    <location>
        <position position="153"/>
    </location>
    <ligand>
        <name>pyruvate</name>
        <dbReference type="ChEBI" id="CHEBI:15361"/>
    </ligand>
</feature>
<feature type="binding site" evidence="2">
    <location>
        <position position="161"/>
    </location>
    <ligand>
        <name>pyruvate</name>
        <dbReference type="ChEBI" id="CHEBI:15361"/>
    </ligand>
</feature>
<feature type="binding site" evidence="2">
    <location>
        <position position="161"/>
    </location>
    <ligand>
        <name>thiamine diphosphate</name>
        <dbReference type="ChEBI" id="CHEBI:58937"/>
        <note>ligand shared with beta subunit</note>
    </ligand>
</feature>
<feature type="binding site" evidence="2">
    <location>
        <position position="163"/>
    </location>
    <ligand>
        <name>pyruvate</name>
        <dbReference type="ChEBI" id="CHEBI:15361"/>
    </ligand>
</feature>
<feature type="binding site" evidence="2">
    <location>
        <position position="163"/>
    </location>
    <ligand>
        <name>thiamine diphosphate</name>
        <dbReference type="ChEBI" id="CHEBI:58937"/>
        <note>ligand shared with beta subunit</note>
    </ligand>
</feature>
<feature type="binding site" evidence="2">
    <location>
        <position position="192"/>
    </location>
    <ligand>
        <name>Mg(2+)</name>
        <dbReference type="ChEBI" id="CHEBI:18420"/>
    </ligand>
</feature>
<feature type="binding site" evidence="2">
    <location>
        <position position="192"/>
    </location>
    <ligand>
        <name>pyruvate</name>
        <dbReference type="ChEBI" id="CHEBI:15361"/>
    </ligand>
</feature>
<feature type="binding site" evidence="2">
    <location>
        <position position="192"/>
    </location>
    <ligand>
        <name>thiamine diphosphate</name>
        <dbReference type="ChEBI" id="CHEBI:58937"/>
        <note>ligand shared with beta subunit</note>
    </ligand>
</feature>
<feature type="binding site" evidence="2">
    <location>
        <position position="193"/>
    </location>
    <ligand>
        <name>pyruvate</name>
        <dbReference type="ChEBI" id="CHEBI:15361"/>
    </ligand>
</feature>
<feature type="binding site" evidence="2">
    <location>
        <position position="193"/>
    </location>
    <ligand>
        <name>thiamine diphosphate</name>
        <dbReference type="ChEBI" id="CHEBI:58937"/>
        <note>ligand shared with beta subunit</note>
    </ligand>
</feature>
<feature type="binding site" evidence="2">
    <location>
        <position position="194"/>
    </location>
    <ligand>
        <name>pyruvate</name>
        <dbReference type="ChEBI" id="CHEBI:15361"/>
    </ligand>
</feature>
<feature type="binding site" evidence="2">
    <location>
        <position position="194"/>
    </location>
    <ligand>
        <name>thiamine diphosphate</name>
        <dbReference type="ChEBI" id="CHEBI:58937"/>
        <note>ligand shared with beta subunit</note>
    </ligand>
</feature>
<feature type="binding site" evidence="2">
    <location>
        <position position="221"/>
    </location>
    <ligand>
        <name>Mg(2+)</name>
        <dbReference type="ChEBI" id="CHEBI:18420"/>
    </ligand>
</feature>
<feature type="binding site" evidence="2">
    <location>
        <position position="221"/>
    </location>
    <ligand>
        <name>pyruvate</name>
        <dbReference type="ChEBI" id="CHEBI:15361"/>
    </ligand>
</feature>
<feature type="binding site" evidence="2">
    <location>
        <position position="221"/>
    </location>
    <ligand>
        <name>thiamine diphosphate</name>
        <dbReference type="ChEBI" id="CHEBI:58937"/>
        <note>ligand shared with beta subunit</note>
    </ligand>
</feature>
<feature type="binding site" evidence="2">
    <location>
        <position position="223"/>
    </location>
    <ligand>
        <name>Mg(2+)</name>
        <dbReference type="ChEBI" id="CHEBI:18420"/>
    </ligand>
</feature>
<feature type="binding site" evidence="2">
    <location>
        <position position="223"/>
    </location>
    <ligand>
        <name>pyruvate</name>
        <dbReference type="ChEBI" id="CHEBI:15361"/>
    </ligand>
</feature>
<feature type="binding site" evidence="2">
    <location>
        <position position="288"/>
    </location>
    <ligand>
        <name>thiamine diphosphate</name>
        <dbReference type="ChEBI" id="CHEBI:58937"/>
        <note>ligand shared with beta subunit</note>
    </ligand>
</feature>
<feature type="modified residue" description="Phosphoserine" evidence="3">
    <location>
        <position position="289"/>
    </location>
</feature>
<feature type="modified residue" description="Phosphoserine" evidence="3">
    <location>
        <position position="296"/>
    </location>
</feature>
<comment type="function">
    <text>The pyruvate dehydrogenase complex catalyzes the overall conversion of pyruvate to acetyl-CoA and CO(2), and thereby links the glycolytic pathway to the tricarboxylic cycle.</text>
</comment>
<comment type="catalytic activity">
    <reaction>
        <text>N(6)-[(R)-lipoyl]-L-lysyl-[protein] + pyruvate + H(+) = N(6)-[(R)-S(8)-acetyldihydrolipoyl]-L-lysyl-[protein] + CO2</text>
        <dbReference type="Rhea" id="RHEA:19189"/>
        <dbReference type="Rhea" id="RHEA-COMP:10474"/>
        <dbReference type="Rhea" id="RHEA-COMP:10478"/>
        <dbReference type="ChEBI" id="CHEBI:15361"/>
        <dbReference type="ChEBI" id="CHEBI:15378"/>
        <dbReference type="ChEBI" id="CHEBI:16526"/>
        <dbReference type="ChEBI" id="CHEBI:83099"/>
        <dbReference type="ChEBI" id="CHEBI:83111"/>
        <dbReference type="EC" id="1.2.4.1"/>
    </reaction>
</comment>
<comment type="cofactor">
    <cofactor evidence="2">
        <name>thiamine diphosphate</name>
        <dbReference type="ChEBI" id="CHEBI:58937"/>
    </cofactor>
    <cofactor evidence="2">
        <name>Mg(2+)</name>
        <dbReference type="ChEBI" id="CHEBI:18420"/>
    </cofactor>
</comment>
<comment type="activity regulation">
    <text>Pyruvate dehydrogenase activity is inhibited by phosphorylation of PDHA1; it is reactivated by dephosphorylation.</text>
</comment>
<comment type="subunit">
    <text evidence="1">Heterotetramer of two PDHA1 and two PDHB subunits. The heterotetramer interacts with DLAT, and is part of the multimeric pyruvate dehydrogenase complex that contains multiple copies of pyruvate dehydrogenase (E1), dihydrolipoamide acetyltransferase (DLAT, E2) and lipoamide dehydrogenase (DLD, E3) (By similarity).</text>
</comment>
<comment type="subcellular location">
    <subcellularLocation>
        <location>Mitochondrion matrix</location>
    </subcellularLocation>
</comment>
<proteinExistence type="evidence at protein level"/>
<protein>
    <recommendedName>
        <fullName>Pyruvate dehydrogenase E1 component subunit alpha type I, mitochondrial</fullName>
        <shortName>PDHA1</shortName>
        <shortName>PDHE1-A</shortName>
        <ecNumber>1.2.4.1</ecNumber>
    </recommendedName>
</protein>